<keyword id="KW-0963">Cytoplasm</keyword>
<keyword id="KW-0671">Queuosine biosynthesis</keyword>
<keyword id="KW-1185">Reference proteome</keyword>
<keyword id="KW-0949">S-adenosyl-L-methionine</keyword>
<keyword id="KW-0808">Transferase</keyword>
<organism>
    <name type="scientific">Lactiplantibacillus plantarum (strain ATCC BAA-793 / NCIMB 8826 / WCFS1)</name>
    <name type="common">Lactobacillus plantarum</name>
    <dbReference type="NCBI Taxonomy" id="220668"/>
    <lineage>
        <taxon>Bacteria</taxon>
        <taxon>Bacillati</taxon>
        <taxon>Bacillota</taxon>
        <taxon>Bacilli</taxon>
        <taxon>Lactobacillales</taxon>
        <taxon>Lactobacillaceae</taxon>
        <taxon>Lactiplantibacillus</taxon>
    </lineage>
</organism>
<sequence length="344" mass="38987">MSLTLEDFDYDLPHELIAQTPIKKRDSSRLLELDRQTGEMQDKHFYDIIDQLNPGDAVVMNNSRVMPARLYGVKPETGGHAEVLLLHNTEGDEWETLMKPAKRAKVGTVISFGDGKLTATVTAEKEDGIRMIEFHYDGIFMEILESLGETPLPPYIKEKLDDPDRYQTVYAKENGSAAAPTAGLHWTKELLQKVQDKGIKLVYLTLHVGLGTFRPVEEDNIDDHKMHSEFYRLDEDAAKTLNEVRQNGGRIIATGTTSIRTLETIGSKFDGEIKPDSGWTDIFIKPGYQWKVVDAFITNFHLPKSTLVMLVAAFTGRDMILKAYQHAIDEKYRFFSFGDAMFIH</sequence>
<name>QUEA_LACPL</name>
<protein>
    <recommendedName>
        <fullName evidence="1">S-adenosylmethionine:tRNA ribosyltransferase-isomerase</fullName>
        <ecNumber evidence="1">2.4.99.17</ecNumber>
    </recommendedName>
    <alternativeName>
        <fullName evidence="1">Queuosine biosynthesis protein QueA</fullName>
    </alternativeName>
</protein>
<gene>
    <name evidence="1" type="primary">queA</name>
    <name type="ordered locus">lp_2285</name>
</gene>
<dbReference type="EC" id="2.4.99.17" evidence="1"/>
<dbReference type="EMBL" id="AL935263">
    <property type="protein sequence ID" value="CCC79491.1"/>
    <property type="molecule type" value="Genomic_DNA"/>
</dbReference>
<dbReference type="RefSeq" id="WP_003641515.1">
    <property type="nucleotide sequence ID" value="NC_004567.2"/>
</dbReference>
<dbReference type="RefSeq" id="YP_004890005.1">
    <property type="nucleotide sequence ID" value="NC_004567.2"/>
</dbReference>
<dbReference type="SMR" id="Q88V04"/>
<dbReference type="STRING" id="220668.lp_2285"/>
<dbReference type="EnsemblBacteria" id="CCC79491">
    <property type="protein sequence ID" value="CCC79491"/>
    <property type="gene ID" value="lp_2285"/>
</dbReference>
<dbReference type="GeneID" id="77215673"/>
<dbReference type="KEGG" id="lpl:lp_2285"/>
<dbReference type="PATRIC" id="fig|220668.9.peg.1933"/>
<dbReference type="eggNOG" id="COG0809">
    <property type="taxonomic scope" value="Bacteria"/>
</dbReference>
<dbReference type="HOGENOM" id="CLU_039110_1_0_9"/>
<dbReference type="OrthoDB" id="9805933at2"/>
<dbReference type="PhylomeDB" id="Q88V04"/>
<dbReference type="UniPathway" id="UPA00392"/>
<dbReference type="Proteomes" id="UP000000432">
    <property type="component" value="Chromosome"/>
</dbReference>
<dbReference type="GO" id="GO:0005737">
    <property type="term" value="C:cytoplasm"/>
    <property type="evidence" value="ECO:0007669"/>
    <property type="project" value="UniProtKB-SubCell"/>
</dbReference>
<dbReference type="GO" id="GO:0051075">
    <property type="term" value="F:S-adenosylmethionine:tRNA ribosyltransferase-isomerase activity"/>
    <property type="evidence" value="ECO:0007669"/>
    <property type="project" value="UniProtKB-EC"/>
</dbReference>
<dbReference type="GO" id="GO:0008616">
    <property type="term" value="P:queuosine biosynthetic process"/>
    <property type="evidence" value="ECO:0007669"/>
    <property type="project" value="UniProtKB-UniRule"/>
</dbReference>
<dbReference type="GO" id="GO:0002099">
    <property type="term" value="P:tRNA wobble guanine modification"/>
    <property type="evidence" value="ECO:0007669"/>
    <property type="project" value="TreeGrafter"/>
</dbReference>
<dbReference type="FunFam" id="2.40.10.240:FF:000002">
    <property type="entry name" value="S-adenosylmethionine:tRNA ribosyltransferase-isomerase"/>
    <property type="match status" value="1"/>
</dbReference>
<dbReference type="FunFam" id="3.40.1780.10:FF:000001">
    <property type="entry name" value="S-adenosylmethionine:tRNA ribosyltransferase-isomerase"/>
    <property type="match status" value="1"/>
</dbReference>
<dbReference type="Gene3D" id="2.40.10.240">
    <property type="entry name" value="QueA-like"/>
    <property type="match status" value="1"/>
</dbReference>
<dbReference type="Gene3D" id="3.40.1780.10">
    <property type="entry name" value="QueA-like"/>
    <property type="match status" value="1"/>
</dbReference>
<dbReference type="HAMAP" id="MF_00113">
    <property type="entry name" value="QueA"/>
    <property type="match status" value="1"/>
</dbReference>
<dbReference type="InterPro" id="IPR003699">
    <property type="entry name" value="QueA"/>
</dbReference>
<dbReference type="InterPro" id="IPR042118">
    <property type="entry name" value="QueA_dom1"/>
</dbReference>
<dbReference type="InterPro" id="IPR042119">
    <property type="entry name" value="QueA_dom2"/>
</dbReference>
<dbReference type="InterPro" id="IPR036100">
    <property type="entry name" value="QueA_sf"/>
</dbReference>
<dbReference type="NCBIfam" id="NF001140">
    <property type="entry name" value="PRK00147.1"/>
    <property type="match status" value="1"/>
</dbReference>
<dbReference type="NCBIfam" id="TIGR00113">
    <property type="entry name" value="queA"/>
    <property type="match status" value="1"/>
</dbReference>
<dbReference type="PANTHER" id="PTHR30307">
    <property type="entry name" value="S-ADENOSYLMETHIONINE:TRNA RIBOSYLTRANSFERASE-ISOMERASE"/>
    <property type="match status" value="1"/>
</dbReference>
<dbReference type="PANTHER" id="PTHR30307:SF0">
    <property type="entry name" value="S-ADENOSYLMETHIONINE:TRNA RIBOSYLTRANSFERASE-ISOMERASE"/>
    <property type="match status" value="1"/>
</dbReference>
<dbReference type="Pfam" id="PF02547">
    <property type="entry name" value="Queuosine_synth"/>
    <property type="match status" value="1"/>
</dbReference>
<dbReference type="SUPFAM" id="SSF111337">
    <property type="entry name" value="QueA-like"/>
    <property type="match status" value="1"/>
</dbReference>
<feature type="chain" id="PRO_0000165412" description="S-adenosylmethionine:tRNA ribosyltransferase-isomerase">
    <location>
        <begin position="1"/>
        <end position="344"/>
    </location>
</feature>
<accession>Q88V04</accession>
<accession>F9UQK2</accession>
<reference key="1">
    <citation type="journal article" date="2003" name="Proc. Natl. Acad. Sci. U.S.A.">
        <title>Complete genome sequence of Lactobacillus plantarum WCFS1.</title>
        <authorList>
            <person name="Kleerebezem M."/>
            <person name="Boekhorst J."/>
            <person name="van Kranenburg R."/>
            <person name="Molenaar D."/>
            <person name="Kuipers O.P."/>
            <person name="Leer R."/>
            <person name="Tarchini R."/>
            <person name="Peters S.A."/>
            <person name="Sandbrink H.M."/>
            <person name="Fiers M.W.E.J."/>
            <person name="Stiekema W."/>
            <person name="Klein Lankhorst R.M."/>
            <person name="Bron P.A."/>
            <person name="Hoffer S.M."/>
            <person name="Nierop Groot M.N."/>
            <person name="Kerkhoven R."/>
            <person name="De Vries M."/>
            <person name="Ursing B."/>
            <person name="De Vos W.M."/>
            <person name="Siezen R.J."/>
        </authorList>
    </citation>
    <scope>NUCLEOTIDE SEQUENCE [LARGE SCALE GENOMIC DNA]</scope>
    <source>
        <strain>ATCC BAA-793 / NCIMB 8826 / WCFS1</strain>
    </source>
</reference>
<reference key="2">
    <citation type="journal article" date="2012" name="J. Bacteriol.">
        <title>Complete resequencing and reannotation of the Lactobacillus plantarum WCFS1 genome.</title>
        <authorList>
            <person name="Siezen R.J."/>
            <person name="Francke C."/>
            <person name="Renckens B."/>
            <person name="Boekhorst J."/>
            <person name="Wels M."/>
            <person name="Kleerebezem M."/>
            <person name="van Hijum S.A."/>
        </authorList>
    </citation>
    <scope>NUCLEOTIDE SEQUENCE [LARGE SCALE GENOMIC DNA]</scope>
    <scope>GENOME REANNOTATION</scope>
    <source>
        <strain>ATCC BAA-793 / NCIMB 8826 / WCFS1</strain>
    </source>
</reference>
<comment type="function">
    <text evidence="1">Transfers and isomerizes the ribose moiety from AdoMet to the 7-aminomethyl group of 7-deazaguanine (preQ1-tRNA) to give epoxyqueuosine (oQ-tRNA).</text>
</comment>
<comment type="catalytic activity">
    <reaction evidence="1">
        <text>7-aminomethyl-7-carbaguanosine(34) in tRNA + S-adenosyl-L-methionine = epoxyqueuosine(34) in tRNA + adenine + L-methionine + 2 H(+)</text>
        <dbReference type="Rhea" id="RHEA:32155"/>
        <dbReference type="Rhea" id="RHEA-COMP:10342"/>
        <dbReference type="Rhea" id="RHEA-COMP:18582"/>
        <dbReference type="ChEBI" id="CHEBI:15378"/>
        <dbReference type="ChEBI" id="CHEBI:16708"/>
        <dbReference type="ChEBI" id="CHEBI:57844"/>
        <dbReference type="ChEBI" id="CHEBI:59789"/>
        <dbReference type="ChEBI" id="CHEBI:82833"/>
        <dbReference type="ChEBI" id="CHEBI:194443"/>
        <dbReference type="EC" id="2.4.99.17"/>
    </reaction>
</comment>
<comment type="pathway">
    <text evidence="1">tRNA modification; tRNA-queuosine biosynthesis.</text>
</comment>
<comment type="subunit">
    <text evidence="1">Monomer.</text>
</comment>
<comment type="subcellular location">
    <subcellularLocation>
        <location evidence="1">Cytoplasm</location>
    </subcellularLocation>
</comment>
<comment type="similarity">
    <text evidence="1">Belongs to the QueA family.</text>
</comment>
<proteinExistence type="inferred from homology"/>
<evidence type="ECO:0000255" key="1">
    <source>
        <dbReference type="HAMAP-Rule" id="MF_00113"/>
    </source>
</evidence>